<evidence type="ECO:0000255" key="1">
    <source>
        <dbReference type="HAMAP-Rule" id="MF_00105"/>
    </source>
</evidence>
<keyword id="KW-0175">Coiled coil</keyword>
<keyword id="KW-0238">DNA-binding</keyword>
<keyword id="KW-1185">Reference proteome</keyword>
<keyword id="KW-0804">Transcription</keyword>
<keyword id="KW-0805">Transcription regulation</keyword>
<reference key="1">
    <citation type="submission" date="2006-02" db="EMBL/GenBank/DDBJ databases">
        <title>Complete sequence of chromosome of Jannaschia sp. CCS1.</title>
        <authorList>
            <consortium name="US DOE Joint Genome Institute"/>
            <person name="Copeland A."/>
            <person name="Lucas S."/>
            <person name="Lapidus A."/>
            <person name="Barry K."/>
            <person name="Detter J.C."/>
            <person name="Glavina del Rio T."/>
            <person name="Hammon N."/>
            <person name="Israni S."/>
            <person name="Pitluck S."/>
            <person name="Brettin T."/>
            <person name="Bruce D."/>
            <person name="Han C."/>
            <person name="Tapia R."/>
            <person name="Gilna P."/>
            <person name="Chertkov O."/>
            <person name="Saunders E."/>
            <person name="Schmutz J."/>
            <person name="Larimer F."/>
            <person name="Land M."/>
            <person name="Kyrpides N."/>
            <person name="Lykidis A."/>
            <person name="Moran M.A."/>
            <person name="Belas R."/>
            <person name="Ye W."/>
            <person name="Buchan A."/>
            <person name="Gonzalez J.M."/>
            <person name="Schell M.A."/>
            <person name="Richardson P."/>
        </authorList>
    </citation>
    <scope>NUCLEOTIDE SEQUENCE [LARGE SCALE GENOMIC DNA]</scope>
    <source>
        <strain>CCS1</strain>
    </source>
</reference>
<name>GREA_JANSC</name>
<dbReference type="EMBL" id="CP000264">
    <property type="protein sequence ID" value="ABD53415.1"/>
    <property type="molecule type" value="Genomic_DNA"/>
</dbReference>
<dbReference type="RefSeq" id="WP_011453624.1">
    <property type="nucleotide sequence ID" value="NC_007802.1"/>
</dbReference>
<dbReference type="SMR" id="Q28V47"/>
<dbReference type="STRING" id="290400.Jann_0498"/>
<dbReference type="KEGG" id="jan:Jann_0498"/>
<dbReference type="eggNOG" id="COG0782">
    <property type="taxonomic scope" value="Bacteria"/>
</dbReference>
<dbReference type="HOGENOM" id="CLU_101379_2_0_5"/>
<dbReference type="OrthoDB" id="9808774at2"/>
<dbReference type="Proteomes" id="UP000008326">
    <property type="component" value="Chromosome"/>
</dbReference>
<dbReference type="GO" id="GO:0003677">
    <property type="term" value="F:DNA binding"/>
    <property type="evidence" value="ECO:0007669"/>
    <property type="project" value="UniProtKB-UniRule"/>
</dbReference>
<dbReference type="GO" id="GO:0070063">
    <property type="term" value="F:RNA polymerase binding"/>
    <property type="evidence" value="ECO:0007669"/>
    <property type="project" value="InterPro"/>
</dbReference>
<dbReference type="GO" id="GO:0006354">
    <property type="term" value="P:DNA-templated transcription elongation"/>
    <property type="evidence" value="ECO:0007669"/>
    <property type="project" value="TreeGrafter"/>
</dbReference>
<dbReference type="GO" id="GO:0032784">
    <property type="term" value="P:regulation of DNA-templated transcription elongation"/>
    <property type="evidence" value="ECO:0007669"/>
    <property type="project" value="UniProtKB-UniRule"/>
</dbReference>
<dbReference type="FunFam" id="1.10.287.180:FF:000001">
    <property type="entry name" value="Transcription elongation factor GreA"/>
    <property type="match status" value="1"/>
</dbReference>
<dbReference type="FunFam" id="3.10.50.30:FF:000001">
    <property type="entry name" value="Transcription elongation factor GreA"/>
    <property type="match status" value="1"/>
</dbReference>
<dbReference type="Gene3D" id="3.10.50.30">
    <property type="entry name" value="Transcription elongation factor, GreA/GreB, C-terminal domain"/>
    <property type="match status" value="1"/>
</dbReference>
<dbReference type="Gene3D" id="1.10.287.180">
    <property type="entry name" value="Transcription elongation factor, GreA/GreB, N-terminal domain"/>
    <property type="match status" value="1"/>
</dbReference>
<dbReference type="HAMAP" id="MF_00105">
    <property type="entry name" value="GreA_GreB"/>
    <property type="match status" value="1"/>
</dbReference>
<dbReference type="InterPro" id="IPR036953">
    <property type="entry name" value="GreA/GreB_C_sf"/>
</dbReference>
<dbReference type="InterPro" id="IPR018151">
    <property type="entry name" value="TF_GreA/GreB_CS"/>
</dbReference>
<dbReference type="InterPro" id="IPR006359">
    <property type="entry name" value="Tscrpt_elong_fac_GreA"/>
</dbReference>
<dbReference type="InterPro" id="IPR028624">
    <property type="entry name" value="Tscrpt_elong_fac_GreA/B"/>
</dbReference>
<dbReference type="InterPro" id="IPR001437">
    <property type="entry name" value="Tscrpt_elong_fac_GreA/B_C"/>
</dbReference>
<dbReference type="InterPro" id="IPR023459">
    <property type="entry name" value="Tscrpt_elong_fac_GreA/B_fam"/>
</dbReference>
<dbReference type="InterPro" id="IPR022691">
    <property type="entry name" value="Tscrpt_elong_fac_GreA/B_N"/>
</dbReference>
<dbReference type="InterPro" id="IPR036805">
    <property type="entry name" value="Tscrpt_elong_fac_GreA/B_N_sf"/>
</dbReference>
<dbReference type="NCBIfam" id="TIGR01462">
    <property type="entry name" value="greA"/>
    <property type="match status" value="1"/>
</dbReference>
<dbReference type="NCBIfam" id="NF001261">
    <property type="entry name" value="PRK00226.1-2"/>
    <property type="match status" value="1"/>
</dbReference>
<dbReference type="NCBIfam" id="NF001263">
    <property type="entry name" value="PRK00226.1-4"/>
    <property type="match status" value="1"/>
</dbReference>
<dbReference type="NCBIfam" id="NF001264">
    <property type="entry name" value="PRK00226.1-5"/>
    <property type="match status" value="1"/>
</dbReference>
<dbReference type="PANTHER" id="PTHR30437">
    <property type="entry name" value="TRANSCRIPTION ELONGATION FACTOR GREA"/>
    <property type="match status" value="1"/>
</dbReference>
<dbReference type="PANTHER" id="PTHR30437:SF4">
    <property type="entry name" value="TRANSCRIPTION ELONGATION FACTOR GREA"/>
    <property type="match status" value="1"/>
</dbReference>
<dbReference type="Pfam" id="PF01272">
    <property type="entry name" value="GreA_GreB"/>
    <property type="match status" value="1"/>
</dbReference>
<dbReference type="Pfam" id="PF03449">
    <property type="entry name" value="GreA_GreB_N"/>
    <property type="match status" value="1"/>
</dbReference>
<dbReference type="PIRSF" id="PIRSF006092">
    <property type="entry name" value="GreA_GreB"/>
    <property type="match status" value="1"/>
</dbReference>
<dbReference type="SUPFAM" id="SSF54534">
    <property type="entry name" value="FKBP-like"/>
    <property type="match status" value="1"/>
</dbReference>
<dbReference type="SUPFAM" id="SSF46557">
    <property type="entry name" value="GreA transcript cleavage protein, N-terminal domain"/>
    <property type="match status" value="1"/>
</dbReference>
<dbReference type="PROSITE" id="PS00829">
    <property type="entry name" value="GREAB_1"/>
    <property type="match status" value="1"/>
</dbReference>
<gene>
    <name evidence="1" type="primary">greA</name>
    <name type="ordered locus">Jann_0498</name>
</gene>
<feature type="chain" id="PRO_1000034266" description="Transcription elongation factor GreA">
    <location>
        <begin position="1"/>
        <end position="156"/>
    </location>
</feature>
<feature type="coiled-coil region" evidence="1">
    <location>
        <begin position="45"/>
        <end position="66"/>
    </location>
</feature>
<protein>
    <recommendedName>
        <fullName evidence="1">Transcription elongation factor GreA</fullName>
    </recommendedName>
    <alternativeName>
        <fullName evidence="1">Transcript cleavage factor GreA</fullName>
    </alternativeName>
</protein>
<proteinExistence type="inferred from homology"/>
<organism>
    <name type="scientific">Jannaschia sp. (strain CCS1)</name>
    <dbReference type="NCBI Taxonomy" id="290400"/>
    <lineage>
        <taxon>Bacteria</taxon>
        <taxon>Pseudomonadati</taxon>
        <taxon>Pseudomonadota</taxon>
        <taxon>Alphaproteobacteria</taxon>
        <taxon>Rhodobacterales</taxon>
        <taxon>Roseobacteraceae</taxon>
        <taxon>Jannaschia</taxon>
    </lineage>
</organism>
<sequence length="156" mass="16911">MEKIPMTPKGLEAMNGELKQLKSVERPAIIKAIAEAREHGDLSENAEYHSAKEKQSFIEGRIKELEGSISLAQVIDPATLSGAIKFGATVDLVDEETEEEKTYMIVGEAEADIEKGLLNIKSPLARALIGKEEGDSVEVRTPGGAKGFEIVKISYV</sequence>
<comment type="function">
    <text evidence="1">Necessary for efficient RNA polymerase transcription elongation past template-encoded arresting sites. The arresting sites in DNA have the property of trapping a certain fraction of elongating RNA polymerases that pass through, resulting in locked ternary complexes. Cleavage of the nascent transcript by cleavage factors such as GreA or GreB allows the resumption of elongation from the new 3'terminus. GreA releases sequences of 2 to 3 nucleotides.</text>
</comment>
<comment type="similarity">
    <text evidence="1">Belongs to the GreA/GreB family.</text>
</comment>
<accession>Q28V47</accession>